<comment type="similarity">
    <text evidence="1">Belongs to the universal ribosomal protein uL29 family.</text>
</comment>
<evidence type="ECO:0000255" key="1">
    <source>
        <dbReference type="HAMAP-Rule" id="MF_00374"/>
    </source>
</evidence>
<evidence type="ECO:0000305" key="2"/>
<protein>
    <recommendedName>
        <fullName evidence="1">Large ribosomal subunit protein uL29</fullName>
    </recommendedName>
    <alternativeName>
        <fullName evidence="2">50S ribosomal protein L29</fullName>
    </alternativeName>
</protein>
<feature type="chain" id="PRO_1000007506" description="Large ribosomal subunit protein uL29">
    <location>
        <begin position="1"/>
        <end position="65"/>
    </location>
</feature>
<gene>
    <name evidence="1" type="primary">rpmC</name>
    <name type="ordered locus">LBUL_0358</name>
</gene>
<reference key="1">
    <citation type="journal article" date="2006" name="Proc. Natl. Acad. Sci. U.S.A.">
        <title>Comparative genomics of the lactic acid bacteria.</title>
        <authorList>
            <person name="Makarova K.S."/>
            <person name="Slesarev A."/>
            <person name="Wolf Y.I."/>
            <person name="Sorokin A."/>
            <person name="Mirkin B."/>
            <person name="Koonin E.V."/>
            <person name="Pavlov A."/>
            <person name="Pavlova N."/>
            <person name="Karamychev V."/>
            <person name="Polouchine N."/>
            <person name="Shakhova V."/>
            <person name="Grigoriev I."/>
            <person name="Lou Y."/>
            <person name="Rohksar D."/>
            <person name="Lucas S."/>
            <person name="Huang K."/>
            <person name="Goodstein D.M."/>
            <person name="Hawkins T."/>
            <person name="Plengvidhya V."/>
            <person name="Welker D."/>
            <person name="Hughes J."/>
            <person name="Goh Y."/>
            <person name="Benson A."/>
            <person name="Baldwin K."/>
            <person name="Lee J.-H."/>
            <person name="Diaz-Muniz I."/>
            <person name="Dosti B."/>
            <person name="Smeianov V."/>
            <person name="Wechter W."/>
            <person name="Barabote R."/>
            <person name="Lorca G."/>
            <person name="Altermann E."/>
            <person name="Barrangou R."/>
            <person name="Ganesan B."/>
            <person name="Xie Y."/>
            <person name="Rawsthorne H."/>
            <person name="Tamir D."/>
            <person name="Parker C."/>
            <person name="Breidt F."/>
            <person name="Broadbent J.R."/>
            <person name="Hutkins R."/>
            <person name="O'Sullivan D."/>
            <person name="Steele J."/>
            <person name="Unlu G."/>
            <person name="Saier M.H. Jr."/>
            <person name="Klaenhammer T."/>
            <person name="Richardson P."/>
            <person name="Kozyavkin S."/>
            <person name="Weimer B.C."/>
            <person name="Mills D.A."/>
        </authorList>
    </citation>
    <scope>NUCLEOTIDE SEQUENCE [LARGE SCALE GENOMIC DNA]</scope>
    <source>
        <strain>ATCC BAA-365 / Lb-18</strain>
    </source>
</reference>
<name>RL29_LACDB</name>
<sequence>MKTKEIRSLSTDELLAKEKQYKEELFNLRFQQATGQLENTARLSQVRKNIARIKTILSEKELEQN</sequence>
<keyword id="KW-0687">Ribonucleoprotein</keyword>
<keyword id="KW-0689">Ribosomal protein</keyword>
<accession>Q04C07</accession>
<proteinExistence type="inferred from homology"/>
<organism>
    <name type="scientific">Lactobacillus delbrueckii subsp. bulgaricus (strain ATCC BAA-365 / Lb-18)</name>
    <dbReference type="NCBI Taxonomy" id="321956"/>
    <lineage>
        <taxon>Bacteria</taxon>
        <taxon>Bacillati</taxon>
        <taxon>Bacillota</taxon>
        <taxon>Bacilli</taxon>
        <taxon>Lactobacillales</taxon>
        <taxon>Lactobacillaceae</taxon>
        <taxon>Lactobacillus</taxon>
    </lineage>
</organism>
<dbReference type="EMBL" id="CP000412">
    <property type="protein sequence ID" value="ABJ58015.1"/>
    <property type="molecule type" value="Genomic_DNA"/>
</dbReference>
<dbReference type="RefSeq" id="WP_002878201.1">
    <property type="nucleotide sequence ID" value="NC_008529.1"/>
</dbReference>
<dbReference type="SMR" id="Q04C07"/>
<dbReference type="GeneID" id="69668434"/>
<dbReference type="KEGG" id="lbu:LBUL_0358"/>
<dbReference type="HOGENOM" id="CLU_158491_5_2_9"/>
<dbReference type="BioCyc" id="LDEL321956:LBUL_RS01675-MONOMER"/>
<dbReference type="GO" id="GO:0022625">
    <property type="term" value="C:cytosolic large ribosomal subunit"/>
    <property type="evidence" value="ECO:0007669"/>
    <property type="project" value="TreeGrafter"/>
</dbReference>
<dbReference type="GO" id="GO:0003735">
    <property type="term" value="F:structural constituent of ribosome"/>
    <property type="evidence" value="ECO:0007669"/>
    <property type="project" value="InterPro"/>
</dbReference>
<dbReference type="GO" id="GO:0006412">
    <property type="term" value="P:translation"/>
    <property type="evidence" value="ECO:0007669"/>
    <property type="project" value="UniProtKB-UniRule"/>
</dbReference>
<dbReference type="CDD" id="cd00427">
    <property type="entry name" value="Ribosomal_L29_HIP"/>
    <property type="match status" value="1"/>
</dbReference>
<dbReference type="FunFam" id="1.10.287.310:FF:000001">
    <property type="entry name" value="50S ribosomal protein L29"/>
    <property type="match status" value="1"/>
</dbReference>
<dbReference type="Gene3D" id="1.10.287.310">
    <property type="match status" value="1"/>
</dbReference>
<dbReference type="HAMAP" id="MF_00374">
    <property type="entry name" value="Ribosomal_uL29"/>
    <property type="match status" value="1"/>
</dbReference>
<dbReference type="InterPro" id="IPR050063">
    <property type="entry name" value="Ribosomal_protein_uL29"/>
</dbReference>
<dbReference type="InterPro" id="IPR001854">
    <property type="entry name" value="Ribosomal_uL29"/>
</dbReference>
<dbReference type="InterPro" id="IPR018254">
    <property type="entry name" value="Ribosomal_uL29_CS"/>
</dbReference>
<dbReference type="InterPro" id="IPR036049">
    <property type="entry name" value="Ribosomal_uL29_sf"/>
</dbReference>
<dbReference type="NCBIfam" id="TIGR00012">
    <property type="entry name" value="L29"/>
    <property type="match status" value="1"/>
</dbReference>
<dbReference type="PANTHER" id="PTHR10916">
    <property type="entry name" value="60S RIBOSOMAL PROTEIN L35/50S RIBOSOMAL PROTEIN L29"/>
    <property type="match status" value="1"/>
</dbReference>
<dbReference type="PANTHER" id="PTHR10916:SF0">
    <property type="entry name" value="LARGE RIBOSOMAL SUBUNIT PROTEIN UL29C"/>
    <property type="match status" value="1"/>
</dbReference>
<dbReference type="Pfam" id="PF00831">
    <property type="entry name" value="Ribosomal_L29"/>
    <property type="match status" value="1"/>
</dbReference>
<dbReference type="SUPFAM" id="SSF46561">
    <property type="entry name" value="Ribosomal protein L29 (L29p)"/>
    <property type="match status" value="1"/>
</dbReference>
<dbReference type="PROSITE" id="PS00579">
    <property type="entry name" value="RIBOSOMAL_L29"/>
    <property type="match status" value="1"/>
</dbReference>